<name>RGS5_BOVIN</name>
<accession>Q3T0T8</accession>
<reference key="1">
    <citation type="submission" date="2005-08" db="EMBL/GenBank/DDBJ databases">
        <authorList>
            <consortium name="NIH - Mammalian Gene Collection (MGC) project"/>
        </authorList>
    </citation>
    <scope>NUCLEOTIDE SEQUENCE [LARGE SCALE MRNA]</scope>
    <source>
        <strain>Crossbred X Angus</strain>
        <tissue>Ileum</tissue>
    </source>
</reference>
<dbReference type="EMBL" id="BC102265">
    <property type="protein sequence ID" value="AAI02266.1"/>
    <property type="molecule type" value="mRNA"/>
</dbReference>
<dbReference type="RefSeq" id="NP_001029879.1">
    <property type="nucleotide sequence ID" value="NM_001034707.2"/>
</dbReference>
<dbReference type="SMR" id="Q3T0T8"/>
<dbReference type="FunCoup" id="Q3T0T8">
    <property type="interactions" value="94"/>
</dbReference>
<dbReference type="STRING" id="9913.ENSBTAP00000061875"/>
<dbReference type="PaxDb" id="9913-ENSBTAP00000032130"/>
<dbReference type="Ensembl" id="ENSBTAT00000032193.5">
    <property type="protein sequence ID" value="ENSBTAP00000032130.4"/>
    <property type="gene ID" value="ENSBTAG00000016341.7"/>
</dbReference>
<dbReference type="GeneID" id="540509"/>
<dbReference type="KEGG" id="bta:540509"/>
<dbReference type="CTD" id="8490"/>
<dbReference type="VEuPathDB" id="HostDB:ENSBTAG00000016341"/>
<dbReference type="VGNC" id="VGNC:55670">
    <property type="gene designation" value="RGS5"/>
</dbReference>
<dbReference type="eggNOG" id="KOG3589">
    <property type="taxonomic scope" value="Eukaryota"/>
</dbReference>
<dbReference type="GeneTree" id="ENSGT00940000157380"/>
<dbReference type="HOGENOM" id="CLU_059863_3_0_1"/>
<dbReference type="InParanoid" id="Q3T0T8"/>
<dbReference type="OMA" id="FIIPYPD"/>
<dbReference type="OrthoDB" id="196547at2759"/>
<dbReference type="TreeFam" id="TF315837"/>
<dbReference type="Reactome" id="R-BTA-416476">
    <property type="pathway name" value="G alpha (q) signalling events"/>
</dbReference>
<dbReference type="Reactome" id="R-BTA-418594">
    <property type="pathway name" value="G alpha (i) signalling events"/>
</dbReference>
<dbReference type="Proteomes" id="UP000009136">
    <property type="component" value="Chromosome 3"/>
</dbReference>
<dbReference type="Bgee" id="ENSBTAG00000016341">
    <property type="expression patterns" value="Expressed in trachea and 102 other cell types or tissues"/>
</dbReference>
<dbReference type="GO" id="GO:0005829">
    <property type="term" value="C:cytosol"/>
    <property type="evidence" value="ECO:0007669"/>
    <property type="project" value="Ensembl"/>
</dbReference>
<dbReference type="GO" id="GO:0043231">
    <property type="term" value="C:intracellular membrane-bounded organelle"/>
    <property type="evidence" value="ECO:0007669"/>
    <property type="project" value="Ensembl"/>
</dbReference>
<dbReference type="GO" id="GO:0016020">
    <property type="term" value="C:membrane"/>
    <property type="evidence" value="ECO:0007669"/>
    <property type="project" value="UniProtKB-SubCell"/>
</dbReference>
<dbReference type="GO" id="GO:0009968">
    <property type="term" value="P:negative regulation of signal transduction"/>
    <property type="evidence" value="ECO:0007669"/>
    <property type="project" value="UniProtKB-KW"/>
</dbReference>
<dbReference type="CDD" id="cd08717">
    <property type="entry name" value="RGS_RGS5"/>
    <property type="match status" value="1"/>
</dbReference>
<dbReference type="FunFam" id="1.10.167.10:FF:000001">
    <property type="entry name" value="Putative regulator of g-protein signaling 12"/>
    <property type="match status" value="1"/>
</dbReference>
<dbReference type="FunFam" id="1.10.196.10:FF:000001">
    <property type="entry name" value="Regulator of G-protein signaling 8"/>
    <property type="match status" value="1"/>
</dbReference>
<dbReference type="Gene3D" id="1.10.196.10">
    <property type="match status" value="1"/>
</dbReference>
<dbReference type="Gene3D" id="1.10.167.10">
    <property type="entry name" value="Regulator of G-protein Signalling 4, domain 2"/>
    <property type="match status" value="1"/>
</dbReference>
<dbReference type="InterPro" id="IPR016137">
    <property type="entry name" value="RGS"/>
</dbReference>
<dbReference type="InterPro" id="IPR034956">
    <property type="entry name" value="RGS_RGS5"/>
</dbReference>
<dbReference type="InterPro" id="IPR036305">
    <property type="entry name" value="RGS_sf"/>
</dbReference>
<dbReference type="InterPro" id="IPR024066">
    <property type="entry name" value="RGS_subdom1/3"/>
</dbReference>
<dbReference type="InterPro" id="IPR044926">
    <property type="entry name" value="RGS_subdomain_2"/>
</dbReference>
<dbReference type="PANTHER" id="PTHR10845">
    <property type="entry name" value="REGULATOR OF G PROTEIN SIGNALING"/>
    <property type="match status" value="1"/>
</dbReference>
<dbReference type="PANTHER" id="PTHR10845:SF42">
    <property type="entry name" value="REGULATOR OF G-PROTEIN SIGNALING 5"/>
    <property type="match status" value="1"/>
</dbReference>
<dbReference type="Pfam" id="PF00615">
    <property type="entry name" value="RGS"/>
    <property type="match status" value="1"/>
</dbReference>
<dbReference type="PRINTS" id="PR01301">
    <property type="entry name" value="RGSPROTEIN"/>
</dbReference>
<dbReference type="SMART" id="SM00315">
    <property type="entry name" value="RGS"/>
    <property type="match status" value="1"/>
</dbReference>
<dbReference type="SUPFAM" id="SSF48097">
    <property type="entry name" value="Regulator of G-protein signaling, RGS"/>
    <property type="match status" value="1"/>
</dbReference>
<dbReference type="PROSITE" id="PS50132">
    <property type="entry name" value="RGS"/>
    <property type="match status" value="1"/>
</dbReference>
<gene>
    <name type="primary">RGS5</name>
</gene>
<evidence type="ECO:0000250" key="1"/>
<evidence type="ECO:0000250" key="2">
    <source>
        <dbReference type="UniProtKB" id="O15539"/>
    </source>
</evidence>
<evidence type="ECO:0000255" key="3">
    <source>
        <dbReference type="PROSITE-ProRule" id="PRU00171"/>
    </source>
</evidence>
<keyword id="KW-0963">Cytoplasm</keyword>
<keyword id="KW-0472">Membrane</keyword>
<keyword id="KW-1185">Reference proteome</keyword>
<keyword id="KW-0734">Signal transduction inhibitor</keyword>
<feature type="chain" id="PRO_0000239867" description="Regulator of G-protein signaling 5">
    <location>
        <begin position="1"/>
        <end position="181"/>
    </location>
</feature>
<feature type="domain" description="RGS" evidence="3">
    <location>
        <begin position="64"/>
        <end position="180"/>
    </location>
</feature>
<comment type="function">
    <text evidence="1">Inhibits signal transduction by increasing the GTPase activity of G protein alpha subunits thereby driving them into their inactive GDP-bound form. Binds to G(i)-alpha and G(o)-alpha, but not to G(s)-alpha (By similarity).</text>
</comment>
<comment type="subcellular location">
    <subcellularLocation>
        <location evidence="2">Cytoplasm</location>
    </subcellularLocation>
    <subcellularLocation>
        <location evidence="2">Membrane</location>
    </subcellularLocation>
</comment>
<proteinExistence type="evidence at transcript level"/>
<organism>
    <name type="scientific">Bos taurus</name>
    <name type="common">Bovine</name>
    <dbReference type="NCBI Taxonomy" id="9913"/>
    <lineage>
        <taxon>Eukaryota</taxon>
        <taxon>Metazoa</taxon>
        <taxon>Chordata</taxon>
        <taxon>Craniata</taxon>
        <taxon>Vertebrata</taxon>
        <taxon>Euteleostomi</taxon>
        <taxon>Mammalia</taxon>
        <taxon>Eutheria</taxon>
        <taxon>Laurasiatheria</taxon>
        <taxon>Artiodactyla</taxon>
        <taxon>Ruminantia</taxon>
        <taxon>Pecora</taxon>
        <taxon>Bovidae</taxon>
        <taxon>Bovinae</taxon>
        <taxon>Bos</taxon>
    </lineage>
</organism>
<protein>
    <recommendedName>
        <fullName>Regulator of G-protein signaling 5</fullName>
        <shortName>RGS5</shortName>
    </recommendedName>
</protein>
<sequence>MCKGLAALPHSCLERAKEIKIKLGILLQKPESAIDLVIPYNEKPEKPAKTQKPSLDEALQWRDSLDKLLQNNYGLASFKSFLKSEFSEENLEFWMACEDYKKIKSPVKMAETAKKIYEEFIQVEAPKEVNIDHFTKEITVKNLVEPSPSSFDVAQKRIHALMEKDSLPRFVRSEFYQEFIK</sequence>